<keyword id="KW-0963">Cytoplasm</keyword>
<keyword id="KW-0312">Gluconeogenesis</keyword>
<keyword id="KW-0324">Glycolysis</keyword>
<keyword id="KW-0408">Iron</keyword>
<keyword id="KW-0413">Isomerase</keyword>
<keyword id="KW-0479">Metal-binding</keyword>
<name>G6PI_PYRAB</name>
<protein>
    <recommendedName>
        <fullName>Glucose-6-phosphate isomerase</fullName>
        <shortName>GPI</shortName>
        <ecNumber>5.3.1.9</ecNumber>
    </recommendedName>
    <alternativeName>
        <fullName>Phosphoglucose isomerase</fullName>
        <shortName>PGI</shortName>
    </alternativeName>
    <alternativeName>
        <fullName>Phosphohexose isomerase</fullName>
        <shortName>PHI</shortName>
    </alternativeName>
</protein>
<reference key="1">
    <citation type="journal article" date="2003" name="Mol. Microbiol.">
        <title>An integrated analysis of the genome of the hyperthermophilic archaeon Pyrococcus abyssi.</title>
        <authorList>
            <person name="Cohen G.N."/>
            <person name="Barbe V."/>
            <person name="Flament D."/>
            <person name="Galperin M."/>
            <person name="Heilig R."/>
            <person name="Lecompte O."/>
            <person name="Poch O."/>
            <person name="Prieur D."/>
            <person name="Querellou J."/>
            <person name="Ripp R."/>
            <person name="Thierry J.-C."/>
            <person name="Van der Oost J."/>
            <person name="Weissenbach J."/>
            <person name="Zivanovic Y."/>
            <person name="Forterre P."/>
        </authorList>
    </citation>
    <scope>NUCLEOTIDE SEQUENCE [LARGE SCALE GENOMIC DNA]</scope>
    <source>
        <strain>GE5 / Orsay</strain>
    </source>
</reference>
<reference key="2">
    <citation type="journal article" date="2012" name="Curr. Microbiol.">
        <title>Re-annotation of two hyperthermophilic archaea Pyrococcus abyssi GE5 and Pyrococcus furiosus DSM 3638.</title>
        <authorList>
            <person name="Gao J."/>
            <person name="Wang J."/>
        </authorList>
    </citation>
    <scope>GENOME REANNOTATION</scope>
    <source>
        <strain>GE5 / Orsay</strain>
    </source>
</reference>
<comment type="catalytic activity">
    <reaction>
        <text>alpha-D-glucose 6-phosphate = beta-D-fructose 6-phosphate</text>
        <dbReference type="Rhea" id="RHEA:11816"/>
        <dbReference type="ChEBI" id="CHEBI:57634"/>
        <dbReference type="ChEBI" id="CHEBI:58225"/>
        <dbReference type="EC" id="5.3.1.9"/>
    </reaction>
</comment>
<comment type="cofactor">
    <cofactor evidence="1">
        <name>Fe cation</name>
        <dbReference type="ChEBI" id="CHEBI:24875"/>
    </cofactor>
    <text evidence="1">Binds 1 Fe cation per subunit.</text>
</comment>
<comment type="pathway">
    <text>Carbohydrate degradation; glycolysis; D-glyceraldehyde 3-phosphate and glycerone phosphate from D-glucose: step 2/4.</text>
</comment>
<comment type="subunit">
    <text evidence="1">Homodimer.</text>
</comment>
<comment type="subcellular location">
    <subcellularLocation>
        <location evidence="1">Cytoplasm</location>
    </subcellularLocation>
</comment>
<comment type="similarity">
    <text evidence="2">Belongs to the archaeal-type GPI family.</text>
</comment>
<comment type="sequence caution" evidence="2">
    <conflict type="erroneous initiation">
        <sequence resource="EMBL-CDS" id="CCE71219"/>
    </conflict>
    <text>Extended N-terminus.</text>
</comment>
<proteinExistence type="inferred from homology"/>
<accession>Q9UXW3</accession>
<accession>G8ZKS8</accession>
<evidence type="ECO:0000250" key="1"/>
<evidence type="ECO:0000305" key="2"/>
<sequence length="189" mass="21525">MYKEPLGVKVDFNTGVIPGAKKIVRRLSDMKGYFLDEKSWEELVKKEDPIVYEVYAIEQEEKEGDLNFATTILYPGKVGKEFFFTKGHYHSKKDRAEVYVALKGKGGMLLQTPEGEARWIPMEPGTVVYVPPYWAHRTVNTGDEPFIFLAIYPADAGHDYGTIAERGFSKIVIEENGEVKVVDNPRWKS</sequence>
<feature type="chain" id="PRO_0000185356" description="Glucose-6-phosphate isomerase">
    <location>
        <begin position="1"/>
        <end position="189"/>
    </location>
</feature>
<feature type="binding site" evidence="1">
    <location>
        <position position="88"/>
    </location>
    <ligand>
        <name>Fe cation</name>
        <dbReference type="ChEBI" id="CHEBI:24875"/>
    </ligand>
</feature>
<feature type="binding site" evidence="1">
    <location>
        <position position="90"/>
    </location>
    <ligand>
        <name>Fe cation</name>
        <dbReference type="ChEBI" id="CHEBI:24875"/>
    </ligand>
</feature>
<feature type="binding site" evidence="1">
    <location>
        <position position="97"/>
    </location>
    <ligand>
        <name>Fe cation</name>
        <dbReference type="ChEBI" id="CHEBI:24875"/>
    </ligand>
</feature>
<feature type="binding site" evidence="1">
    <location>
        <position position="136"/>
    </location>
    <ligand>
        <name>Fe cation</name>
        <dbReference type="ChEBI" id="CHEBI:24875"/>
    </ligand>
</feature>
<dbReference type="EC" id="5.3.1.9"/>
<dbReference type="EMBL" id="AJ248288">
    <property type="protein sequence ID" value="CAB50650.1"/>
    <property type="molecule type" value="Genomic_DNA"/>
</dbReference>
<dbReference type="EMBL" id="HE613800">
    <property type="protein sequence ID" value="CCE71219.1"/>
    <property type="status" value="ALT_INIT"/>
    <property type="molecule type" value="Genomic_DNA"/>
</dbReference>
<dbReference type="PIR" id="D75026">
    <property type="entry name" value="D75026"/>
</dbReference>
<dbReference type="RefSeq" id="WP_048147196.1">
    <property type="nucleotide sequence ID" value="NC_000868.1"/>
</dbReference>
<dbReference type="SMR" id="Q9UXW3"/>
<dbReference type="STRING" id="272844.PAB1199"/>
<dbReference type="KEGG" id="pab:PAB1199"/>
<dbReference type="PATRIC" id="fig|272844.11.peg.1864"/>
<dbReference type="eggNOG" id="arCOG02602">
    <property type="taxonomic scope" value="Archaea"/>
</dbReference>
<dbReference type="HOGENOM" id="CLU_105797_0_0_2"/>
<dbReference type="OrthoDB" id="49661at2157"/>
<dbReference type="PhylomeDB" id="Q9UXW3"/>
<dbReference type="UniPathway" id="UPA00109">
    <property type="reaction ID" value="UER00181"/>
</dbReference>
<dbReference type="Proteomes" id="UP000000810">
    <property type="component" value="Chromosome"/>
</dbReference>
<dbReference type="Proteomes" id="UP000009139">
    <property type="component" value="Chromosome"/>
</dbReference>
<dbReference type="GO" id="GO:0005737">
    <property type="term" value="C:cytoplasm"/>
    <property type="evidence" value="ECO:0007669"/>
    <property type="project" value="UniProtKB-SubCell"/>
</dbReference>
<dbReference type="GO" id="GO:0004347">
    <property type="term" value="F:glucose-6-phosphate isomerase activity"/>
    <property type="evidence" value="ECO:0007669"/>
    <property type="project" value="UniProtKB-UniRule"/>
</dbReference>
<dbReference type="GO" id="GO:0005506">
    <property type="term" value="F:iron ion binding"/>
    <property type="evidence" value="ECO:0007669"/>
    <property type="project" value="InterPro"/>
</dbReference>
<dbReference type="GO" id="GO:0006094">
    <property type="term" value="P:gluconeogenesis"/>
    <property type="evidence" value="ECO:0007669"/>
    <property type="project" value="UniProtKB-UniRule"/>
</dbReference>
<dbReference type="GO" id="GO:0006096">
    <property type="term" value="P:glycolytic process"/>
    <property type="evidence" value="ECO:0007669"/>
    <property type="project" value="UniProtKB-UniRule"/>
</dbReference>
<dbReference type="CDD" id="cd02218">
    <property type="entry name" value="cupin_PGI"/>
    <property type="match status" value="1"/>
</dbReference>
<dbReference type="Gene3D" id="2.60.120.10">
    <property type="entry name" value="Jelly Rolls"/>
    <property type="match status" value="1"/>
</dbReference>
<dbReference type="HAMAP" id="MF_01410">
    <property type="entry name" value="G6P_isomerase_arch"/>
    <property type="match status" value="1"/>
</dbReference>
<dbReference type="InterPro" id="IPR016758">
    <property type="entry name" value="G6P_isomerase_archaea/bacteria"/>
</dbReference>
<dbReference type="InterPro" id="IPR010551">
    <property type="entry name" value="G6P_isomerase_prok"/>
</dbReference>
<dbReference type="InterPro" id="IPR051610">
    <property type="entry name" value="GPI/OXD"/>
</dbReference>
<dbReference type="InterPro" id="IPR014710">
    <property type="entry name" value="RmlC-like_jellyroll"/>
</dbReference>
<dbReference type="InterPro" id="IPR011051">
    <property type="entry name" value="RmlC_Cupin_sf"/>
</dbReference>
<dbReference type="PANTHER" id="PTHR35848:SF6">
    <property type="entry name" value="CUPIN TYPE-2 DOMAIN-CONTAINING PROTEIN"/>
    <property type="match status" value="1"/>
</dbReference>
<dbReference type="PANTHER" id="PTHR35848">
    <property type="entry name" value="OXALATE-BINDING PROTEIN"/>
    <property type="match status" value="1"/>
</dbReference>
<dbReference type="Pfam" id="PF06560">
    <property type="entry name" value="GPI"/>
    <property type="match status" value="1"/>
</dbReference>
<dbReference type="PIRSF" id="PIRSF019325">
    <property type="entry name" value="Glucose-6-phosphate_isomerase"/>
    <property type="match status" value="1"/>
</dbReference>
<dbReference type="SUPFAM" id="SSF51182">
    <property type="entry name" value="RmlC-like cupins"/>
    <property type="match status" value="1"/>
</dbReference>
<gene>
    <name type="primary">pgiA</name>
    <name type="ordered locus">PYRAB17450</name>
    <name type="ORF">PAB1199</name>
</gene>
<organism>
    <name type="scientific">Pyrococcus abyssi (strain GE5 / Orsay)</name>
    <dbReference type="NCBI Taxonomy" id="272844"/>
    <lineage>
        <taxon>Archaea</taxon>
        <taxon>Methanobacteriati</taxon>
        <taxon>Methanobacteriota</taxon>
        <taxon>Thermococci</taxon>
        <taxon>Thermococcales</taxon>
        <taxon>Thermococcaceae</taxon>
        <taxon>Pyrococcus</taxon>
    </lineage>
</organism>